<feature type="chain" id="PRO_0000163572" description="Large ribosomal subunit protein bL19">
    <location>
        <begin position="1"/>
        <end position="135"/>
    </location>
</feature>
<sequence length="135" mass="14754">MSKLNKTILADFEAAQIQRKLPEFNQGDTVVVNVKVKEGNRERVQAYEGVVIGTKNAGLNSSFTVRKISHGFGVERVFQTHSAIIDSVEVKRRGKVRAGKLYYLRGLEGKAARIKEDLAAAAQAKAARQAAAKAE</sequence>
<name>RL19_XANAC</name>
<accession>Q8PMY0</accession>
<protein>
    <recommendedName>
        <fullName evidence="1">Large ribosomal subunit protein bL19</fullName>
    </recommendedName>
    <alternativeName>
        <fullName evidence="2">50S ribosomal protein L19</fullName>
    </alternativeName>
</protein>
<dbReference type="EMBL" id="AE008923">
    <property type="protein sequence ID" value="AAM36166.1"/>
    <property type="molecule type" value="Genomic_DNA"/>
</dbReference>
<dbReference type="RefSeq" id="WP_003484215.1">
    <property type="nucleotide sequence ID" value="NC_003919.1"/>
</dbReference>
<dbReference type="SMR" id="Q8PMY0"/>
<dbReference type="GeneID" id="97509644"/>
<dbReference type="KEGG" id="xac:XAC1295"/>
<dbReference type="eggNOG" id="COG0335">
    <property type="taxonomic scope" value="Bacteria"/>
</dbReference>
<dbReference type="HOGENOM" id="CLU_103507_2_1_6"/>
<dbReference type="Proteomes" id="UP000000576">
    <property type="component" value="Chromosome"/>
</dbReference>
<dbReference type="GO" id="GO:0022625">
    <property type="term" value="C:cytosolic large ribosomal subunit"/>
    <property type="evidence" value="ECO:0007669"/>
    <property type="project" value="TreeGrafter"/>
</dbReference>
<dbReference type="GO" id="GO:0003735">
    <property type="term" value="F:structural constituent of ribosome"/>
    <property type="evidence" value="ECO:0007669"/>
    <property type="project" value="InterPro"/>
</dbReference>
<dbReference type="GO" id="GO:0006412">
    <property type="term" value="P:translation"/>
    <property type="evidence" value="ECO:0007669"/>
    <property type="project" value="UniProtKB-UniRule"/>
</dbReference>
<dbReference type="FunFam" id="2.30.30.790:FF:000001">
    <property type="entry name" value="50S ribosomal protein L19"/>
    <property type="match status" value="1"/>
</dbReference>
<dbReference type="Gene3D" id="2.30.30.790">
    <property type="match status" value="1"/>
</dbReference>
<dbReference type="HAMAP" id="MF_00402">
    <property type="entry name" value="Ribosomal_bL19"/>
    <property type="match status" value="1"/>
</dbReference>
<dbReference type="InterPro" id="IPR001857">
    <property type="entry name" value="Ribosomal_bL19"/>
</dbReference>
<dbReference type="InterPro" id="IPR018257">
    <property type="entry name" value="Ribosomal_bL19_CS"/>
</dbReference>
<dbReference type="InterPro" id="IPR038657">
    <property type="entry name" value="Ribosomal_bL19_sf"/>
</dbReference>
<dbReference type="InterPro" id="IPR008991">
    <property type="entry name" value="Translation_prot_SH3-like_sf"/>
</dbReference>
<dbReference type="NCBIfam" id="TIGR01024">
    <property type="entry name" value="rplS_bact"/>
    <property type="match status" value="1"/>
</dbReference>
<dbReference type="PANTHER" id="PTHR15680:SF9">
    <property type="entry name" value="LARGE RIBOSOMAL SUBUNIT PROTEIN BL19M"/>
    <property type="match status" value="1"/>
</dbReference>
<dbReference type="PANTHER" id="PTHR15680">
    <property type="entry name" value="RIBOSOMAL PROTEIN L19"/>
    <property type="match status" value="1"/>
</dbReference>
<dbReference type="Pfam" id="PF01245">
    <property type="entry name" value="Ribosomal_L19"/>
    <property type="match status" value="1"/>
</dbReference>
<dbReference type="PIRSF" id="PIRSF002191">
    <property type="entry name" value="Ribosomal_L19"/>
    <property type="match status" value="1"/>
</dbReference>
<dbReference type="PRINTS" id="PR00061">
    <property type="entry name" value="RIBOSOMALL19"/>
</dbReference>
<dbReference type="SUPFAM" id="SSF50104">
    <property type="entry name" value="Translation proteins SH3-like domain"/>
    <property type="match status" value="1"/>
</dbReference>
<dbReference type="PROSITE" id="PS01015">
    <property type="entry name" value="RIBOSOMAL_L19"/>
    <property type="match status" value="1"/>
</dbReference>
<proteinExistence type="inferred from homology"/>
<keyword id="KW-0687">Ribonucleoprotein</keyword>
<keyword id="KW-0689">Ribosomal protein</keyword>
<reference key="1">
    <citation type="journal article" date="2002" name="Nature">
        <title>Comparison of the genomes of two Xanthomonas pathogens with differing host specificities.</title>
        <authorList>
            <person name="da Silva A.C.R."/>
            <person name="Ferro J.A."/>
            <person name="Reinach F.C."/>
            <person name="Farah C.S."/>
            <person name="Furlan L.R."/>
            <person name="Quaggio R.B."/>
            <person name="Monteiro-Vitorello C.B."/>
            <person name="Van Sluys M.A."/>
            <person name="Almeida N.F. Jr."/>
            <person name="Alves L.M.C."/>
            <person name="do Amaral A.M."/>
            <person name="Bertolini M.C."/>
            <person name="Camargo L.E.A."/>
            <person name="Camarotte G."/>
            <person name="Cannavan F."/>
            <person name="Cardozo J."/>
            <person name="Chambergo F."/>
            <person name="Ciapina L.P."/>
            <person name="Cicarelli R.M.B."/>
            <person name="Coutinho L.L."/>
            <person name="Cursino-Santos J.R."/>
            <person name="El-Dorry H."/>
            <person name="Faria J.B."/>
            <person name="Ferreira A.J.S."/>
            <person name="Ferreira R.C.C."/>
            <person name="Ferro M.I.T."/>
            <person name="Formighieri E.F."/>
            <person name="Franco M.C."/>
            <person name="Greggio C.C."/>
            <person name="Gruber A."/>
            <person name="Katsuyama A.M."/>
            <person name="Kishi L.T."/>
            <person name="Leite R.P."/>
            <person name="Lemos E.G.M."/>
            <person name="Lemos M.V.F."/>
            <person name="Locali E.C."/>
            <person name="Machado M.A."/>
            <person name="Madeira A.M.B.N."/>
            <person name="Martinez-Rossi N.M."/>
            <person name="Martins E.C."/>
            <person name="Meidanis J."/>
            <person name="Menck C.F.M."/>
            <person name="Miyaki C.Y."/>
            <person name="Moon D.H."/>
            <person name="Moreira L.M."/>
            <person name="Novo M.T.M."/>
            <person name="Okura V.K."/>
            <person name="Oliveira M.C."/>
            <person name="Oliveira V.R."/>
            <person name="Pereira H.A."/>
            <person name="Rossi A."/>
            <person name="Sena J.A.D."/>
            <person name="Silva C."/>
            <person name="de Souza R.F."/>
            <person name="Spinola L.A.F."/>
            <person name="Takita M.A."/>
            <person name="Tamura R.E."/>
            <person name="Teixeira E.C."/>
            <person name="Tezza R.I.D."/>
            <person name="Trindade dos Santos M."/>
            <person name="Truffi D."/>
            <person name="Tsai S.M."/>
            <person name="White F.F."/>
            <person name="Setubal J.C."/>
            <person name="Kitajima J.P."/>
        </authorList>
    </citation>
    <scope>NUCLEOTIDE SEQUENCE [LARGE SCALE GENOMIC DNA]</scope>
    <source>
        <strain>306</strain>
    </source>
</reference>
<evidence type="ECO:0000255" key="1">
    <source>
        <dbReference type="HAMAP-Rule" id="MF_00402"/>
    </source>
</evidence>
<evidence type="ECO:0000305" key="2"/>
<comment type="function">
    <text evidence="1">This protein is located at the 30S-50S ribosomal subunit interface and may play a role in the structure and function of the aminoacyl-tRNA binding site.</text>
</comment>
<comment type="similarity">
    <text evidence="1">Belongs to the bacterial ribosomal protein bL19 family.</text>
</comment>
<gene>
    <name evidence="1" type="primary">rplS</name>
    <name type="ordered locus">XAC1295</name>
</gene>
<organism>
    <name type="scientific">Xanthomonas axonopodis pv. citri (strain 306)</name>
    <dbReference type="NCBI Taxonomy" id="190486"/>
    <lineage>
        <taxon>Bacteria</taxon>
        <taxon>Pseudomonadati</taxon>
        <taxon>Pseudomonadota</taxon>
        <taxon>Gammaproteobacteria</taxon>
        <taxon>Lysobacterales</taxon>
        <taxon>Lysobacteraceae</taxon>
        <taxon>Xanthomonas</taxon>
    </lineage>
</organism>